<proteinExistence type="evidence at protein level"/>
<feature type="signal peptide" evidence="3">
    <location>
        <begin position="1"/>
        <end position="29"/>
    </location>
</feature>
<feature type="propeptide" id="PRO_0000004750" evidence="3">
    <location>
        <begin position="30"/>
        <end position="130"/>
    </location>
</feature>
<feature type="peptide" id="PRO_0000004751" description="Protegrin-4">
    <location>
        <begin position="131"/>
        <end position="148"/>
    </location>
</feature>
<feature type="region of interest" description="Disordered" evidence="4">
    <location>
        <begin position="61"/>
        <end position="80"/>
    </location>
</feature>
<feature type="modified residue" description="Arginine amide" evidence="2">
    <location>
        <position position="148"/>
    </location>
</feature>
<feature type="disulfide bond" evidence="5">
    <location>
        <begin position="85"/>
        <end position="96"/>
    </location>
</feature>
<feature type="disulfide bond" evidence="5">
    <location>
        <begin position="107"/>
        <end position="124"/>
    </location>
</feature>
<feature type="disulfide bond" evidence="1">
    <location>
        <begin position="136"/>
        <end position="145"/>
    </location>
</feature>
<feature type="disulfide bond" evidence="1">
    <location>
        <begin position="138"/>
        <end position="143"/>
    </location>
</feature>
<feature type="helix" evidence="7">
    <location>
        <begin position="34"/>
        <end position="48"/>
    </location>
</feature>
<feature type="strand" evidence="7">
    <location>
        <begin position="52"/>
        <end position="60"/>
    </location>
</feature>
<feature type="strand" evidence="7">
    <location>
        <begin position="64"/>
        <end position="68"/>
    </location>
</feature>
<feature type="strand" evidence="7">
    <location>
        <begin position="70"/>
        <end position="72"/>
    </location>
</feature>
<feature type="strand" evidence="7">
    <location>
        <begin position="74"/>
        <end position="88"/>
    </location>
</feature>
<feature type="turn" evidence="7">
    <location>
        <begin position="93"/>
        <end position="95"/>
    </location>
</feature>
<feature type="strand" evidence="7">
    <location>
        <begin position="104"/>
        <end position="111"/>
    </location>
</feature>
<feature type="strand" evidence="7">
    <location>
        <begin position="113"/>
        <end position="115"/>
    </location>
</feature>
<feature type="strand" evidence="7">
    <location>
        <begin position="122"/>
        <end position="127"/>
    </location>
</feature>
<feature type="strand" evidence="8">
    <location>
        <begin position="133"/>
        <end position="138"/>
    </location>
</feature>
<feature type="strand" evidence="8">
    <location>
        <begin position="143"/>
        <end position="147"/>
    </location>
</feature>
<name>PG4_PIG</name>
<evidence type="ECO:0000250" key="1"/>
<evidence type="ECO:0000250" key="2">
    <source>
        <dbReference type="UniProtKB" id="P32194"/>
    </source>
</evidence>
<evidence type="ECO:0000255" key="3"/>
<evidence type="ECO:0000256" key="4">
    <source>
        <dbReference type="SAM" id="MobiDB-lite"/>
    </source>
</evidence>
<evidence type="ECO:0000269" key="5">
    <source>
    </source>
</evidence>
<evidence type="ECO:0000305" key="6"/>
<evidence type="ECO:0007829" key="7">
    <source>
        <dbReference type="PDB" id="1N5H"/>
    </source>
</evidence>
<evidence type="ECO:0007829" key="8">
    <source>
        <dbReference type="PDB" id="6QKF"/>
    </source>
</evidence>
<reference key="1">
    <citation type="journal article" date="1994" name="FEBS Lett.">
        <title>Identification of a new member of the protegrin family by cDNA cloning.</title>
        <authorList>
            <person name="Zhao C."/>
            <person name="Liu L."/>
            <person name="Lehrer R.I."/>
        </authorList>
    </citation>
    <scope>NUCLEOTIDE SEQUENCE [MRNA]</scope>
    <source>
        <tissue>Bone marrow</tissue>
    </source>
</reference>
<reference key="2">
    <citation type="journal article" date="2003" name="Biochemistry">
        <title>NMR structure of the cathelin-like domain of the protegrin-3 precursor.</title>
        <authorList>
            <person name="Yang Y."/>
            <person name="Sanchez J.F."/>
            <person name="Strub M.-P."/>
            <person name="Brutscher B."/>
            <person name="Aumelas A."/>
        </authorList>
    </citation>
    <scope>STRUCTURE BY NMR OF 30-130</scope>
    <scope>DISULFIDE BONDS</scope>
</reference>
<organism>
    <name type="scientific">Sus scrofa</name>
    <name type="common">Pig</name>
    <dbReference type="NCBI Taxonomy" id="9823"/>
    <lineage>
        <taxon>Eukaryota</taxon>
        <taxon>Metazoa</taxon>
        <taxon>Chordata</taxon>
        <taxon>Craniata</taxon>
        <taxon>Vertebrata</taxon>
        <taxon>Euteleostomi</taxon>
        <taxon>Mammalia</taxon>
        <taxon>Eutheria</taxon>
        <taxon>Laurasiatheria</taxon>
        <taxon>Artiodactyla</taxon>
        <taxon>Suina</taxon>
        <taxon>Suidae</taxon>
        <taxon>Sus</taxon>
    </lineage>
</organism>
<dbReference type="EMBL" id="X83268">
    <property type="protein sequence ID" value="CAA58241.1"/>
    <property type="molecule type" value="mRNA"/>
</dbReference>
<dbReference type="PIR" id="B53895">
    <property type="entry name" value="B53895"/>
</dbReference>
<dbReference type="PDB" id="1N5H">
    <property type="method" value="NMR"/>
    <property type="chains" value="A=30-130"/>
</dbReference>
<dbReference type="PDB" id="1N5P">
    <property type="method" value="NMR"/>
    <property type="chains" value="A=30-130"/>
</dbReference>
<dbReference type="PDB" id="6QKF">
    <property type="method" value="NMR"/>
    <property type="chains" value="A=131-148"/>
</dbReference>
<dbReference type="PDBsum" id="1N5H"/>
<dbReference type="PDBsum" id="1N5P"/>
<dbReference type="PDBsum" id="6QKF"/>
<dbReference type="BMRB" id="P49933"/>
<dbReference type="SMR" id="P49933"/>
<dbReference type="FunCoup" id="P49933">
    <property type="interactions" value="103"/>
</dbReference>
<dbReference type="InParanoid" id="P49933"/>
<dbReference type="ChiTaRS" id="NPG4">
    <property type="organism name" value="pig"/>
</dbReference>
<dbReference type="EvolutionaryTrace" id="P49933"/>
<dbReference type="Proteomes" id="UP000008227">
    <property type="component" value="Unplaced"/>
</dbReference>
<dbReference type="Proteomes" id="UP000314985">
    <property type="component" value="Unplaced"/>
</dbReference>
<dbReference type="Proteomes" id="UP000694570">
    <property type="component" value="Unplaced"/>
</dbReference>
<dbReference type="Proteomes" id="UP000694571">
    <property type="component" value="Unplaced"/>
</dbReference>
<dbReference type="Proteomes" id="UP000694720">
    <property type="component" value="Unplaced"/>
</dbReference>
<dbReference type="Proteomes" id="UP000694722">
    <property type="component" value="Unplaced"/>
</dbReference>
<dbReference type="Proteomes" id="UP000694723">
    <property type="component" value="Unplaced"/>
</dbReference>
<dbReference type="Proteomes" id="UP000694724">
    <property type="component" value="Unplaced"/>
</dbReference>
<dbReference type="Proteomes" id="UP000694725">
    <property type="component" value="Unplaced"/>
</dbReference>
<dbReference type="Proteomes" id="UP000694726">
    <property type="component" value="Unplaced"/>
</dbReference>
<dbReference type="Proteomes" id="UP000694727">
    <property type="component" value="Unplaced"/>
</dbReference>
<dbReference type="Proteomes" id="UP000694728">
    <property type="component" value="Unplaced"/>
</dbReference>
<dbReference type="GO" id="GO:0005615">
    <property type="term" value="C:extracellular space"/>
    <property type="evidence" value="ECO:0000318"/>
    <property type="project" value="GO_Central"/>
</dbReference>
<dbReference type="GO" id="GO:0001530">
    <property type="term" value="F:lipopolysaccharide binding"/>
    <property type="evidence" value="ECO:0000318"/>
    <property type="project" value="GO_Central"/>
</dbReference>
<dbReference type="GO" id="GO:0061844">
    <property type="term" value="P:antimicrobial humoral immune response mediated by antimicrobial peptide"/>
    <property type="evidence" value="ECO:0000318"/>
    <property type="project" value="GO_Central"/>
</dbReference>
<dbReference type="GO" id="GO:0050829">
    <property type="term" value="P:defense response to Gram-negative bacterium"/>
    <property type="evidence" value="ECO:0000318"/>
    <property type="project" value="GO_Central"/>
</dbReference>
<dbReference type="GO" id="GO:0050830">
    <property type="term" value="P:defense response to Gram-positive bacterium"/>
    <property type="evidence" value="ECO:0000318"/>
    <property type="project" value="GO_Central"/>
</dbReference>
<dbReference type="GO" id="GO:0045087">
    <property type="term" value="P:innate immune response"/>
    <property type="evidence" value="ECO:0000318"/>
    <property type="project" value="GO_Central"/>
</dbReference>
<dbReference type="FunFam" id="3.10.450.10:FF:000003">
    <property type="entry name" value="Cathelicidin antimicrobial peptide"/>
    <property type="match status" value="1"/>
</dbReference>
<dbReference type="Gene3D" id="3.10.450.10">
    <property type="match status" value="1"/>
</dbReference>
<dbReference type="InterPro" id="IPR001894">
    <property type="entry name" value="Cathelicidin-like"/>
</dbReference>
<dbReference type="InterPro" id="IPR018216">
    <property type="entry name" value="Cathelicidin_CS"/>
</dbReference>
<dbReference type="InterPro" id="IPR046350">
    <property type="entry name" value="Cystatin_sf"/>
</dbReference>
<dbReference type="PANTHER" id="PTHR10206">
    <property type="entry name" value="CATHELICIDIN"/>
    <property type="match status" value="1"/>
</dbReference>
<dbReference type="PANTHER" id="PTHR10206:SF2">
    <property type="entry name" value="CATHELICIDIN ANTIMICROBIAL PEPTIDE"/>
    <property type="match status" value="1"/>
</dbReference>
<dbReference type="Pfam" id="PF00666">
    <property type="entry name" value="Cathelicidins"/>
    <property type="match status" value="1"/>
</dbReference>
<dbReference type="SUPFAM" id="SSF54403">
    <property type="entry name" value="Cystatin/monellin"/>
    <property type="match status" value="1"/>
</dbReference>
<dbReference type="PROSITE" id="PS00946">
    <property type="entry name" value="CATHELICIDINS_1"/>
    <property type="match status" value="1"/>
</dbReference>
<dbReference type="PROSITE" id="PS00947">
    <property type="entry name" value="CATHELICIDINS_2"/>
    <property type="match status" value="1"/>
</dbReference>
<gene>
    <name type="primary">NPG4</name>
</gene>
<keyword id="KW-0002">3D-structure</keyword>
<keyword id="KW-0027">Amidation</keyword>
<keyword id="KW-0044">Antibiotic</keyword>
<keyword id="KW-0929">Antimicrobial</keyword>
<keyword id="KW-1015">Disulfide bond</keyword>
<keyword id="KW-1185">Reference proteome</keyword>
<keyword id="KW-0964">Secreted</keyword>
<keyword id="KW-0732">Signal</keyword>
<sequence>METQRASLCLGRWSLWLLLLALVVPSASAQALSYREAVLRAVDRLNEQSSEANLYRLLELDQPPKADEDPGTPKPVSFTVKETVCPRPTRQPPELCDFKENGRVKQCVGTVTLDQIKDPLDITCNEVQGVRGGRLCYCRGWICFCVGRG</sequence>
<comment type="function">
    <text evidence="1">Microbicidal activity.</text>
</comment>
<comment type="subcellular location">
    <subcellularLocation>
        <location>Secreted</location>
    </subcellularLocation>
</comment>
<comment type="similarity">
    <text evidence="6">Belongs to the cathelicidin family.</text>
</comment>
<protein>
    <recommendedName>
        <fullName>Protegrin-4</fullName>
        <shortName>PG-4</shortName>
    </recommendedName>
</protein>
<accession>P49933</accession>